<gene>
    <name evidence="1" type="primary">gatA</name>
    <name type="ordered locus">Msp_0181</name>
</gene>
<reference key="1">
    <citation type="journal article" date="2006" name="J. Bacteriol.">
        <title>The genome sequence of Methanosphaera stadtmanae reveals why this human intestinal archaeon is restricted to methanol and H2 for methane formation and ATP synthesis.</title>
        <authorList>
            <person name="Fricke W.F."/>
            <person name="Seedorf H."/>
            <person name="Henne A."/>
            <person name="Kruer M."/>
            <person name="Liesegang H."/>
            <person name="Hedderich R."/>
            <person name="Gottschalk G."/>
            <person name="Thauer R.K."/>
        </authorList>
    </citation>
    <scope>NUCLEOTIDE SEQUENCE [LARGE SCALE GENOMIC DNA]</scope>
    <source>
        <strain>ATCC 43021 / DSM 3091 / JCM 11832 / MCB-3</strain>
    </source>
</reference>
<comment type="function">
    <text evidence="1">Allows the formation of correctly charged Gln-tRNA(Gln) through the transamidation of misacylated Glu-tRNA(Gln) in organisms which lack glutaminyl-tRNA synthetase. The reaction takes place in the presence of glutamine and ATP through an activated gamma-phospho-Glu-tRNA(Gln).</text>
</comment>
<comment type="catalytic activity">
    <reaction evidence="1">
        <text>L-glutamyl-tRNA(Gln) + L-glutamine + ATP + H2O = L-glutaminyl-tRNA(Gln) + L-glutamate + ADP + phosphate + H(+)</text>
        <dbReference type="Rhea" id="RHEA:17521"/>
        <dbReference type="Rhea" id="RHEA-COMP:9681"/>
        <dbReference type="Rhea" id="RHEA-COMP:9684"/>
        <dbReference type="ChEBI" id="CHEBI:15377"/>
        <dbReference type="ChEBI" id="CHEBI:15378"/>
        <dbReference type="ChEBI" id="CHEBI:29985"/>
        <dbReference type="ChEBI" id="CHEBI:30616"/>
        <dbReference type="ChEBI" id="CHEBI:43474"/>
        <dbReference type="ChEBI" id="CHEBI:58359"/>
        <dbReference type="ChEBI" id="CHEBI:78520"/>
        <dbReference type="ChEBI" id="CHEBI:78521"/>
        <dbReference type="ChEBI" id="CHEBI:456216"/>
        <dbReference type="EC" id="6.3.5.7"/>
    </reaction>
</comment>
<comment type="subunit">
    <text evidence="1">Heterotrimer of A, B and C subunits.</text>
</comment>
<comment type="similarity">
    <text evidence="1">Belongs to the amidase family. GatA subfamily.</text>
</comment>
<evidence type="ECO:0000255" key="1">
    <source>
        <dbReference type="HAMAP-Rule" id="MF_00120"/>
    </source>
</evidence>
<organism>
    <name type="scientific">Methanosphaera stadtmanae (strain ATCC 43021 / DSM 3091 / JCM 11832 / MCB-3)</name>
    <dbReference type="NCBI Taxonomy" id="339860"/>
    <lineage>
        <taxon>Archaea</taxon>
        <taxon>Methanobacteriati</taxon>
        <taxon>Methanobacteriota</taxon>
        <taxon>Methanomada group</taxon>
        <taxon>Methanobacteria</taxon>
        <taxon>Methanobacteriales</taxon>
        <taxon>Methanobacteriaceae</taxon>
        <taxon>Methanosphaera</taxon>
    </lineage>
</organism>
<proteinExistence type="inferred from homology"/>
<accession>Q2NHN5</accession>
<feature type="chain" id="PRO_0000241182" description="Glutamyl-tRNA(Gln) amidotransferase subunit A">
    <location>
        <begin position="1"/>
        <end position="455"/>
    </location>
</feature>
<feature type="active site" description="Charge relay system" evidence="1">
    <location>
        <position position="74"/>
    </location>
</feature>
<feature type="active site" description="Charge relay system" evidence="1">
    <location>
        <position position="149"/>
    </location>
</feature>
<feature type="active site" description="Acyl-ester intermediate" evidence="1">
    <location>
        <position position="173"/>
    </location>
</feature>
<protein>
    <recommendedName>
        <fullName evidence="1">Glutamyl-tRNA(Gln) amidotransferase subunit A</fullName>
        <shortName evidence="1">Glu-ADT subunit A</shortName>
        <ecNumber evidence="1">6.3.5.7</ecNumber>
    </recommendedName>
</protein>
<name>GATA_METST</name>
<dbReference type="EC" id="6.3.5.7" evidence="1"/>
<dbReference type="EMBL" id="CP000102">
    <property type="protein sequence ID" value="ABC56598.1"/>
    <property type="molecule type" value="Genomic_DNA"/>
</dbReference>
<dbReference type="RefSeq" id="WP_011405797.1">
    <property type="nucleotide sequence ID" value="NC_007681.1"/>
</dbReference>
<dbReference type="SMR" id="Q2NHN5"/>
<dbReference type="STRING" id="339860.Msp_0181"/>
<dbReference type="GeneID" id="41324754"/>
<dbReference type="KEGG" id="mst:Msp_0181"/>
<dbReference type="eggNOG" id="arCOG01717">
    <property type="taxonomic scope" value="Archaea"/>
</dbReference>
<dbReference type="HOGENOM" id="CLU_009600_0_3_2"/>
<dbReference type="OrthoDB" id="7931at2157"/>
<dbReference type="Proteomes" id="UP000001931">
    <property type="component" value="Chromosome"/>
</dbReference>
<dbReference type="GO" id="GO:0030956">
    <property type="term" value="C:glutamyl-tRNA(Gln) amidotransferase complex"/>
    <property type="evidence" value="ECO:0007669"/>
    <property type="project" value="InterPro"/>
</dbReference>
<dbReference type="GO" id="GO:0005524">
    <property type="term" value="F:ATP binding"/>
    <property type="evidence" value="ECO:0007669"/>
    <property type="project" value="UniProtKB-KW"/>
</dbReference>
<dbReference type="GO" id="GO:0050567">
    <property type="term" value="F:glutaminyl-tRNA synthase (glutamine-hydrolyzing) activity"/>
    <property type="evidence" value="ECO:0007669"/>
    <property type="project" value="UniProtKB-UniRule"/>
</dbReference>
<dbReference type="GO" id="GO:0006412">
    <property type="term" value="P:translation"/>
    <property type="evidence" value="ECO:0007669"/>
    <property type="project" value="UniProtKB-UniRule"/>
</dbReference>
<dbReference type="Gene3D" id="3.90.1300.10">
    <property type="entry name" value="Amidase signature (AS) domain"/>
    <property type="match status" value="1"/>
</dbReference>
<dbReference type="HAMAP" id="MF_00120">
    <property type="entry name" value="GatA"/>
    <property type="match status" value="1"/>
</dbReference>
<dbReference type="InterPro" id="IPR000120">
    <property type="entry name" value="Amidase"/>
</dbReference>
<dbReference type="InterPro" id="IPR020556">
    <property type="entry name" value="Amidase_CS"/>
</dbReference>
<dbReference type="InterPro" id="IPR023631">
    <property type="entry name" value="Amidase_dom"/>
</dbReference>
<dbReference type="InterPro" id="IPR036928">
    <property type="entry name" value="AS_sf"/>
</dbReference>
<dbReference type="InterPro" id="IPR004412">
    <property type="entry name" value="GatA"/>
</dbReference>
<dbReference type="NCBIfam" id="TIGR00132">
    <property type="entry name" value="gatA"/>
    <property type="match status" value="1"/>
</dbReference>
<dbReference type="PANTHER" id="PTHR11895:SF7">
    <property type="entry name" value="GLUTAMYL-TRNA(GLN) AMIDOTRANSFERASE SUBUNIT A, MITOCHONDRIAL"/>
    <property type="match status" value="1"/>
</dbReference>
<dbReference type="PANTHER" id="PTHR11895">
    <property type="entry name" value="TRANSAMIDASE"/>
    <property type="match status" value="1"/>
</dbReference>
<dbReference type="Pfam" id="PF01425">
    <property type="entry name" value="Amidase"/>
    <property type="match status" value="1"/>
</dbReference>
<dbReference type="SUPFAM" id="SSF75304">
    <property type="entry name" value="Amidase signature (AS) enzymes"/>
    <property type="match status" value="1"/>
</dbReference>
<dbReference type="PROSITE" id="PS00571">
    <property type="entry name" value="AMIDASES"/>
    <property type="match status" value="1"/>
</dbReference>
<keyword id="KW-0067">ATP-binding</keyword>
<keyword id="KW-0436">Ligase</keyword>
<keyword id="KW-0547">Nucleotide-binding</keyword>
<keyword id="KW-0648">Protein biosynthesis</keyword>
<keyword id="KW-1185">Reference proteome</keyword>
<sequence>MKVIEKVEAIKQQEITATENLEQMYSTIEEKNDDINAFVQLDIEKARKTAEDIDKRIKNNEETGKLAGLVIGIKSNINVEDFIISAASPTLKNYYGSYNATVINRILDEDGVIIGLTNMDEFAAGSSTETSMYGPTNNPKAPGHIPGGSSGGSAAAIAANMCDITLGSDTGGSIRNPASHCGVMGFKPTYGMVSRQGLLDLAMSLDQIGPFANDTTGIGLMLNVICGYDPYDTTTINKQPEDFLKDTTNSTLEGQTIGVVKEFMDITDDKITSQINKSIDDMTSLGAEIKELSFEDINLGLPTYYLINYVEFFSATRKYDGRKYGERIEEVCGAEVARRIEIGSYISQKEFSGKYYNKALQARSLIRNEFNELLNDVDVIAGPTVPKLPHKIGEEIETMDMYAYDVLTVLANITGIPASSMNSGLVDNIPVGLQLQAKPEDDHKILSTMSALENN</sequence>